<name>AATB_SACI2</name>
<keyword id="KW-0066">ATP synthesis</keyword>
<keyword id="KW-1003">Cell membrane</keyword>
<keyword id="KW-0375">Hydrogen ion transport</keyword>
<keyword id="KW-0406">Ion transport</keyword>
<keyword id="KW-0472">Membrane</keyword>
<keyword id="KW-0813">Transport</keyword>
<gene>
    <name evidence="1" type="primary">atpB</name>
    <name type="ordered locus">LS215_1673</name>
</gene>
<evidence type="ECO:0000255" key="1">
    <source>
        <dbReference type="HAMAP-Rule" id="MF_00310"/>
    </source>
</evidence>
<reference key="1">
    <citation type="journal article" date="2009" name="Proc. Natl. Acad. Sci. U.S.A.">
        <title>Biogeography of the Sulfolobus islandicus pan-genome.</title>
        <authorList>
            <person name="Reno M.L."/>
            <person name="Held N.L."/>
            <person name="Fields C.J."/>
            <person name="Burke P.V."/>
            <person name="Whitaker R.J."/>
        </authorList>
    </citation>
    <scope>NUCLEOTIDE SEQUENCE [LARGE SCALE GENOMIC DNA]</scope>
    <source>
        <strain>L.S.2.15 / Lassen #1</strain>
    </source>
</reference>
<protein>
    <recommendedName>
        <fullName evidence="1">A-type ATP synthase subunit B</fullName>
    </recommendedName>
</protein>
<comment type="function">
    <text evidence="1">Component of the A-type ATP synthase that produces ATP from ADP in the presence of a proton gradient across the membrane. The B chain is a regulatory subunit.</text>
</comment>
<comment type="subunit">
    <text evidence="1">Has multiple subunits with at least A(3), B(3), C, D, E, F, H, I and proteolipid K(x).</text>
</comment>
<comment type="subcellular location">
    <subcellularLocation>
        <location evidence="1">Cell membrane</location>
        <topology evidence="1">Peripheral membrane protein</topology>
    </subcellularLocation>
</comment>
<comment type="similarity">
    <text evidence="1">Belongs to the ATPase alpha/beta chains family.</text>
</comment>
<feature type="chain" id="PRO_1000205044" description="A-type ATP synthase subunit B">
    <location>
        <begin position="1"/>
        <end position="463"/>
    </location>
</feature>
<accession>C3MQL4</accession>
<proteinExistence type="inferred from homology"/>
<organism>
    <name type="scientific">Saccharolobus islandicus (strain L.S.2.15 / Lassen #1)</name>
    <name type="common">Sulfolobus islandicus</name>
    <dbReference type="NCBI Taxonomy" id="429572"/>
    <lineage>
        <taxon>Archaea</taxon>
        <taxon>Thermoproteota</taxon>
        <taxon>Thermoprotei</taxon>
        <taxon>Sulfolobales</taxon>
        <taxon>Sulfolobaceae</taxon>
        <taxon>Saccharolobus</taxon>
    </lineage>
</organism>
<sequence length="463" mass="51104">MLSVREFSNISMIKGPLIYVQGVTDASYNELVEIEMPNGEKRRGLVIDSQMGIAIVQVFEGTTGVSPTGTKIRMLGRGLEVKISEEMLGRIFNPLGDSLDNGPPVIKGEKRDINGSPLNPAAREYPEEFIQTGISAIDGLNALLRGQKLPIFSGSGLPANMLAAQIAKQATVRGEESNFAVVFAAIGARYDDALFFRKFFEETGAINRVAMIVSLANEPPVMKTLTPKTALTLAEYLAFEQDMHVLAILIDMTNYCEALREISAAREEVPGRGGYPGYMYTDLATIYERAGKVLGKKGSITQMPILTMPNDDITHPIPDLTGYITEGQIVLDRALYNKGIYPPINVLMSLSRLAKDGIGEGKTRDDHKDVSNQLFASYARAVDTRGLAAIIGEDSLSEVDRKYLLFGELFERKFVSQGFNENRDIETTLDIGWEILSVLPESELTNIKTQYIKKYHPNYRGKK</sequence>
<dbReference type="EMBL" id="CP001399">
    <property type="protein sequence ID" value="ACP35677.1"/>
    <property type="molecule type" value="Genomic_DNA"/>
</dbReference>
<dbReference type="RefSeq" id="WP_012711558.1">
    <property type="nucleotide sequence ID" value="NC_012589.1"/>
</dbReference>
<dbReference type="SMR" id="C3MQL4"/>
<dbReference type="KEGG" id="sis:LS215_1673"/>
<dbReference type="HOGENOM" id="CLU_022916_0_0_2"/>
<dbReference type="OrthoDB" id="32941at2157"/>
<dbReference type="Proteomes" id="UP000001747">
    <property type="component" value="Chromosome"/>
</dbReference>
<dbReference type="GO" id="GO:0005886">
    <property type="term" value="C:plasma membrane"/>
    <property type="evidence" value="ECO:0007669"/>
    <property type="project" value="UniProtKB-SubCell"/>
</dbReference>
<dbReference type="GO" id="GO:0033178">
    <property type="term" value="C:proton-transporting two-sector ATPase complex, catalytic domain"/>
    <property type="evidence" value="ECO:0007669"/>
    <property type="project" value="InterPro"/>
</dbReference>
<dbReference type="GO" id="GO:0005524">
    <property type="term" value="F:ATP binding"/>
    <property type="evidence" value="ECO:0007669"/>
    <property type="project" value="UniProtKB-UniRule"/>
</dbReference>
<dbReference type="GO" id="GO:0046933">
    <property type="term" value="F:proton-transporting ATP synthase activity, rotational mechanism"/>
    <property type="evidence" value="ECO:0007669"/>
    <property type="project" value="UniProtKB-UniRule"/>
</dbReference>
<dbReference type="GO" id="GO:0046961">
    <property type="term" value="F:proton-transporting ATPase activity, rotational mechanism"/>
    <property type="evidence" value="ECO:0007669"/>
    <property type="project" value="TreeGrafter"/>
</dbReference>
<dbReference type="GO" id="GO:0042777">
    <property type="term" value="P:proton motive force-driven plasma membrane ATP synthesis"/>
    <property type="evidence" value="ECO:0007669"/>
    <property type="project" value="UniProtKB-UniRule"/>
</dbReference>
<dbReference type="CDD" id="cd18112">
    <property type="entry name" value="ATP-synt_V_A-type_beta_C"/>
    <property type="match status" value="1"/>
</dbReference>
<dbReference type="CDD" id="cd18118">
    <property type="entry name" value="ATP-synt_V_A-type_beta_N"/>
    <property type="match status" value="1"/>
</dbReference>
<dbReference type="CDD" id="cd01135">
    <property type="entry name" value="V_A-ATPase_B"/>
    <property type="match status" value="1"/>
</dbReference>
<dbReference type="Gene3D" id="3.40.50.12240">
    <property type="match status" value="1"/>
</dbReference>
<dbReference type="HAMAP" id="MF_00310">
    <property type="entry name" value="ATP_synth_B_arch"/>
    <property type="match status" value="1"/>
</dbReference>
<dbReference type="InterPro" id="IPR055190">
    <property type="entry name" value="ATP-synt_VA_C"/>
</dbReference>
<dbReference type="InterPro" id="IPR020003">
    <property type="entry name" value="ATPase_a/bsu_AS"/>
</dbReference>
<dbReference type="InterPro" id="IPR005724">
    <property type="entry name" value="ATPase_A1-cplx_bsu"/>
</dbReference>
<dbReference type="InterPro" id="IPR004100">
    <property type="entry name" value="ATPase_F1/V1/A1_a/bsu_N"/>
</dbReference>
<dbReference type="InterPro" id="IPR000194">
    <property type="entry name" value="ATPase_F1/V1/A1_a/bsu_nucl-bd"/>
</dbReference>
<dbReference type="InterPro" id="IPR027417">
    <property type="entry name" value="P-loop_NTPase"/>
</dbReference>
<dbReference type="InterPro" id="IPR022879">
    <property type="entry name" value="V-ATPase_su_B/beta"/>
</dbReference>
<dbReference type="NCBIfam" id="TIGR01041">
    <property type="entry name" value="ATP_syn_B_arch"/>
    <property type="match status" value="1"/>
</dbReference>
<dbReference type="NCBIfam" id="NF003235">
    <property type="entry name" value="PRK04196.1"/>
    <property type="match status" value="1"/>
</dbReference>
<dbReference type="PANTHER" id="PTHR43389">
    <property type="entry name" value="V-TYPE PROTON ATPASE SUBUNIT B"/>
    <property type="match status" value="1"/>
</dbReference>
<dbReference type="PANTHER" id="PTHR43389:SF4">
    <property type="entry name" value="V-TYPE PROTON ATPASE SUBUNIT B"/>
    <property type="match status" value="1"/>
</dbReference>
<dbReference type="Pfam" id="PF00006">
    <property type="entry name" value="ATP-synt_ab"/>
    <property type="match status" value="1"/>
</dbReference>
<dbReference type="Pfam" id="PF02874">
    <property type="entry name" value="ATP-synt_ab_N"/>
    <property type="match status" value="1"/>
</dbReference>
<dbReference type="Pfam" id="PF22919">
    <property type="entry name" value="ATP-synt_VA_C"/>
    <property type="match status" value="1"/>
</dbReference>
<dbReference type="PIRSF" id="PIRSF039114">
    <property type="entry name" value="V-ATPsynth_beta/V-ATPase_B"/>
    <property type="match status" value="1"/>
</dbReference>
<dbReference type="SUPFAM" id="SSF52540">
    <property type="entry name" value="P-loop containing nucleoside triphosphate hydrolases"/>
    <property type="match status" value="1"/>
</dbReference>
<dbReference type="PROSITE" id="PS00152">
    <property type="entry name" value="ATPASE_ALPHA_BETA"/>
    <property type="match status" value="1"/>
</dbReference>